<proteinExistence type="evidence at protein level"/>
<organism>
    <name type="scientific">Bacillus subtilis (strain 168)</name>
    <dbReference type="NCBI Taxonomy" id="224308"/>
    <lineage>
        <taxon>Bacteria</taxon>
        <taxon>Bacillati</taxon>
        <taxon>Bacillota</taxon>
        <taxon>Bacilli</taxon>
        <taxon>Bacillales</taxon>
        <taxon>Bacillaceae</taxon>
        <taxon>Bacillus</taxon>
    </lineage>
</organism>
<keyword id="KW-0269">Exonuclease</keyword>
<keyword id="KW-0378">Hydrolase</keyword>
<keyword id="KW-0540">Nuclease</keyword>
<keyword id="KW-0597">Phosphoprotein</keyword>
<keyword id="KW-1185">Reference proteome</keyword>
<name>YORK_BACSU</name>
<dbReference type="EC" id="3.1.-.-"/>
<dbReference type="EMBL" id="AL009126">
    <property type="protein sequence ID" value="CAB13927.1"/>
    <property type="molecule type" value="Genomic_DNA"/>
</dbReference>
<dbReference type="RefSeq" id="NP_389917.1">
    <property type="nucleotide sequence ID" value="NC_000964.3"/>
</dbReference>
<dbReference type="SMR" id="O31903"/>
<dbReference type="FunCoup" id="O31903">
    <property type="interactions" value="108"/>
</dbReference>
<dbReference type="STRING" id="224308.BSU20350"/>
<dbReference type="iPTMnet" id="O31903"/>
<dbReference type="PaxDb" id="224308-BSU20350"/>
<dbReference type="EnsemblBacteria" id="CAB13927">
    <property type="protein sequence ID" value="CAB13927"/>
    <property type="gene ID" value="BSU_20350"/>
</dbReference>
<dbReference type="GeneID" id="939545"/>
<dbReference type="KEGG" id="bsu:BSU20350"/>
<dbReference type="PATRIC" id="fig|224308.179.peg.2225"/>
<dbReference type="eggNOG" id="COG0608">
    <property type="taxonomic scope" value="Bacteria"/>
</dbReference>
<dbReference type="InParanoid" id="O31903"/>
<dbReference type="OrthoDB" id="9809852at2"/>
<dbReference type="PhylomeDB" id="O31903"/>
<dbReference type="BioCyc" id="BSUB:BSU20350-MONOMER"/>
<dbReference type="Proteomes" id="UP000001570">
    <property type="component" value="Chromosome"/>
</dbReference>
<dbReference type="GO" id="GO:0045145">
    <property type="term" value="F:single-stranded DNA 5'-3' DNA exonuclease activity"/>
    <property type="evidence" value="ECO:0000318"/>
    <property type="project" value="GO_Central"/>
</dbReference>
<dbReference type="GO" id="GO:0006310">
    <property type="term" value="P:DNA recombination"/>
    <property type="evidence" value="ECO:0000318"/>
    <property type="project" value="GO_Central"/>
</dbReference>
<dbReference type="GO" id="GO:0006281">
    <property type="term" value="P:DNA repair"/>
    <property type="evidence" value="ECO:0007669"/>
    <property type="project" value="InterPro"/>
</dbReference>
<dbReference type="Gene3D" id="3.10.310.30">
    <property type="match status" value="1"/>
</dbReference>
<dbReference type="Gene3D" id="3.90.1640.30">
    <property type="match status" value="1"/>
</dbReference>
<dbReference type="InterPro" id="IPR001667">
    <property type="entry name" value="DDH_dom"/>
</dbReference>
<dbReference type="InterPro" id="IPR038763">
    <property type="entry name" value="DHH_sf"/>
</dbReference>
<dbReference type="InterPro" id="IPR004610">
    <property type="entry name" value="RecJ"/>
</dbReference>
<dbReference type="InterPro" id="IPR041122">
    <property type="entry name" value="RecJ_OB"/>
</dbReference>
<dbReference type="InterPro" id="IPR051673">
    <property type="entry name" value="SSDNA_exonuclease_RecJ"/>
</dbReference>
<dbReference type="NCBIfam" id="TIGR00644">
    <property type="entry name" value="recJ"/>
    <property type="match status" value="1"/>
</dbReference>
<dbReference type="PANTHER" id="PTHR30255">
    <property type="entry name" value="SINGLE-STRANDED-DNA-SPECIFIC EXONUCLEASE RECJ"/>
    <property type="match status" value="1"/>
</dbReference>
<dbReference type="PANTHER" id="PTHR30255:SF2">
    <property type="entry name" value="SINGLE-STRANDED-DNA-SPECIFIC EXONUCLEASE RECJ"/>
    <property type="match status" value="1"/>
</dbReference>
<dbReference type="Pfam" id="PF01368">
    <property type="entry name" value="DHH"/>
    <property type="match status" value="1"/>
</dbReference>
<dbReference type="Pfam" id="PF17768">
    <property type="entry name" value="RecJ_OB"/>
    <property type="match status" value="1"/>
</dbReference>
<dbReference type="SUPFAM" id="SSF64182">
    <property type="entry name" value="DHH phosphoesterases"/>
    <property type="match status" value="1"/>
</dbReference>
<protein>
    <recommendedName>
        <fullName>Putative SPbeta prophage-derived single-strand DNA-specific exonuclease YorK</fullName>
        <ecNumber>3.1.-.-</ecNumber>
    </recommendedName>
</protein>
<reference key="1">
    <citation type="journal article" date="1997" name="Nature">
        <title>The complete genome sequence of the Gram-positive bacterium Bacillus subtilis.</title>
        <authorList>
            <person name="Kunst F."/>
            <person name="Ogasawara N."/>
            <person name="Moszer I."/>
            <person name="Albertini A.M."/>
            <person name="Alloni G."/>
            <person name="Azevedo V."/>
            <person name="Bertero M.G."/>
            <person name="Bessieres P."/>
            <person name="Bolotin A."/>
            <person name="Borchert S."/>
            <person name="Borriss R."/>
            <person name="Boursier L."/>
            <person name="Brans A."/>
            <person name="Braun M."/>
            <person name="Brignell S.C."/>
            <person name="Bron S."/>
            <person name="Brouillet S."/>
            <person name="Bruschi C.V."/>
            <person name="Caldwell B."/>
            <person name="Capuano V."/>
            <person name="Carter N.M."/>
            <person name="Choi S.-K."/>
            <person name="Codani J.-J."/>
            <person name="Connerton I.F."/>
            <person name="Cummings N.J."/>
            <person name="Daniel R.A."/>
            <person name="Denizot F."/>
            <person name="Devine K.M."/>
            <person name="Duesterhoeft A."/>
            <person name="Ehrlich S.D."/>
            <person name="Emmerson P.T."/>
            <person name="Entian K.-D."/>
            <person name="Errington J."/>
            <person name="Fabret C."/>
            <person name="Ferrari E."/>
            <person name="Foulger D."/>
            <person name="Fritz C."/>
            <person name="Fujita M."/>
            <person name="Fujita Y."/>
            <person name="Fuma S."/>
            <person name="Galizzi A."/>
            <person name="Galleron N."/>
            <person name="Ghim S.-Y."/>
            <person name="Glaser P."/>
            <person name="Goffeau A."/>
            <person name="Golightly E.J."/>
            <person name="Grandi G."/>
            <person name="Guiseppi G."/>
            <person name="Guy B.J."/>
            <person name="Haga K."/>
            <person name="Haiech J."/>
            <person name="Harwood C.R."/>
            <person name="Henaut A."/>
            <person name="Hilbert H."/>
            <person name="Holsappel S."/>
            <person name="Hosono S."/>
            <person name="Hullo M.-F."/>
            <person name="Itaya M."/>
            <person name="Jones L.-M."/>
            <person name="Joris B."/>
            <person name="Karamata D."/>
            <person name="Kasahara Y."/>
            <person name="Klaerr-Blanchard M."/>
            <person name="Klein C."/>
            <person name="Kobayashi Y."/>
            <person name="Koetter P."/>
            <person name="Koningstein G."/>
            <person name="Krogh S."/>
            <person name="Kumano M."/>
            <person name="Kurita K."/>
            <person name="Lapidus A."/>
            <person name="Lardinois S."/>
            <person name="Lauber J."/>
            <person name="Lazarevic V."/>
            <person name="Lee S.-M."/>
            <person name="Levine A."/>
            <person name="Liu H."/>
            <person name="Masuda S."/>
            <person name="Mauel C."/>
            <person name="Medigue C."/>
            <person name="Medina N."/>
            <person name="Mellado R.P."/>
            <person name="Mizuno M."/>
            <person name="Moestl D."/>
            <person name="Nakai S."/>
            <person name="Noback M."/>
            <person name="Noone D."/>
            <person name="O'Reilly M."/>
            <person name="Ogawa K."/>
            <person name="Ogiwara A."/>
            <person name="Oudega B."/>
            <person name="Park S.-H."/>
            <person name="Parro V."/>
            <person name="Pohl T.M."/>
            <person name="Portetelle D."/>
            <person name="Porwollik S."/>
            <person name="Prescott A.M."/>
            <person name="Presecan E."/>
            <person name="Pujic P."/>
            <person name="Purnelle B."/>
            <person name="Rapoport G."/>
            <person name="Rey M."/>
            <person name="Reynolds S."/>
            <person name="Rieger M."/>
            <person name="Rivolta C."/>
            <person name="Rocha E."/>
            <person name="Roche B."/>
            <person name="Rose M."/>
            <person name="Sadaie Y."/>
            <person name="Sato T."/>
            <person name="Scanlan E."/>
            <person name="Schleich S."/>
            <person name="Schroeter R."/>
            <person name="Scoffone F."/>
            <person name="Sekiguchi J."/>
            <person name="Sekowska A."/>
            <person name="Seror S.J."/>
            <person name="Serror P."/>
            <person name="Shin B.-S."/>
            <person name="Soldo B."/>
            <person name="Sorokin A."/>
            <person name="Tacconi E."/>
            <person name="Takagi T."/>
            <person name="Takahashi H."/>
            <person name="Takemaru K."/>
            <person name="Takeuchi M."/>
            <person name="Tamakoshi A."/>
            <person name="Tanaka T."/>
            <person name="Terpstra P."/>
            <person name="Tognoni A."/>
            <person name="Tosato V."/>
            <person name="Uchiyama S."/>
            <person name="Vandenbol M."/>
            <person name="Vannier F."/>
            <person name="Vassarotti A."/>
            <person name="Viari A."/>
            <person name="Wambutt R."/>
            <person name="Wedler E."/>
            <person name="Wedler H."/>
            <person name="Weitzenegger T."/>
            <person name="Winters P."/>
            <person name="Wipat A."/>
            <person name="Yamamoto H."/>
            <person name="Yamane K."/>
            <person name="Yasumoto K."/>
            <person name="Yata K."/>
            <person name="Yoshida K."/>
            <person name="Yoshikawa H.-F."/>
            <person name="Zumstein E."/>
            <person name="Yoshikawa H."/>
            <person name="Danchin A."/>
        </authorList>
    </citation>
    <scope>NUCLEOTIDE SEQUENCE [LARGE SCALE GENOMIC DNA]</scope>
    <source>
        <strain>168</strain>
    </source>
</reference>
<reference key="2">
    <citation type="journal article" date="2007" name="Mol. Cell. Proteomics">
        <title>The serine/threonine/tyrosine phosphoproteome of the model bacterium Bacillus subtilis.</title>
        <authorList>
            <person name="Macek B."/>
            <person name="Mijakovic I."/>
            <person name="Olsen J.V."/>
            <person name="Gnad F."/>
            <person name="Kumar C."/>
            <person name="Jensen P.R."/>
            <person name="Mann M."/>
        </authorList>
    </citation>
    <scope>PHOSPHORYLATION [LARGE SCALE ANALYSIS] AT TYR-473</scope>
    <scope>IDENTIFICATION BY MASS SPECTROMETRY</scope>
    <source>
        <strain>168</strain>
    </source>
</reference>
<accession>O31903</accession>
<gene>
    <name type="primary">yorK</name>
    <name type="ordered locus">BSU20350</name>
</gene>
<evidence type="ECO:0000269" key="1">
    <source>
    </source>
</evidence>
<evidence type="ECO:0000305" key="2"/>
<feature type="chain" id="PRO_0000360577" description="Putative SPbeta prophage-derived single-strand DNA-specific exonuclease YorK">
    <location>
        <begin position="1"/>
        <end position="576"/>
    </location>
</feature>
<feature type="modified residue" description="Phosphotyrosine" evidence="1">
    <location>
        <position position="473"/>
    </location>
</feature>
<comment type="function">
    <text evidence="2">Putative single-stranded-DNA-specific exonuclease.</text>
</comment>
<comment type="similarity">
    <text evidence="2">Belongs to the RecJ family.</text>
</comment>
<sequence length="576" mass="65774">MEYRLIGDNDYNFDPLATILKNRGIEDPKLFVNVDQSSVIHYSKLNNIDKAADCLIRHLNNKNKLFVQVDSDVDGYTSSSIIINYIKKICPKANIHYRIQDGKEHGIFIDTIPDDVDLVIIPDAGSSQFEEHEALNKRGTEIIVIDHHECERVSEHAIVVNNQLSPNYSNKTLTGAGMAYKFCQAIDEKLNKNEAEQFLDLVSIGNIADSADSRNLETRYFMNEGLKKIKHPLLKKLFKKQEFSTKGDKSIQNTQFFINPLINAAIRVGSSEEKDQMMRAFLLSKEKVPYKKRGQSETELVSIHEDTVRILGNLKAKQKRIVDAAGVEIKNRIEEKSLTANKVLIVYIEGILDKSLTGLVANQLAEEYKKPVLLARNDPEKGKDILSGSIRGYDKGFIKDFKKELIDTGLFEFVEGHPNAAGFAIKRQNLILVNKVLNEKFKDINIEEDIQNVDFEIPAKRLRKEFILQLDGYKDYWGYKVEEPLIAITDLEIEVEQIEHLGKKNKTTVKFKHGDIEYIRFKSDENYFNQLTASNGTLVINVIGKAKANEYKGKKTPQIEIYELEVVRTKQKELVF</sequence>